<comment type="function">
    <text evidence="1">Catalyzes the initial step of the lipid cycle reactions in the biosynthesis of the cell wall peptidoglycan: transfers peptidoglycan precursor phospho-MurNAc-pentapeptide from UDP-MurNAc-pentapeptide onto the lipid carrier undecaprenyl phosphate, yielding undecaprenyl-pyrophosphoryl-MurNAc-pentapeptide, known as lipid I.</text>
</comment>
<comment type="catalytic activity">
    <reaction evidence="1">
        <text>UDP-N-acetyl-alpha-D-muramoyl-L-alanyl-gamma-D-glutamyl-meso-2,6-diaminopimeloyl-D-alanyl-D-alanine + di-trans,octa-cis-undecaprenyl phosphate = di-trans,octa-cis-undecaprenyl diphospho-N-acetyl-alpha-D-muramoyl-L-alanyl-D-glutamyl-meso-2,6-diaminopimeloyl-D-alanyl-D-alanine + UMP</text>
        <dbReference type="Rhea" id="RHEA:28386"/>
        <dbReference type="ChEBI" id="CHEBI:57865"/>
        <dbReference type="ChEBI" id="CHEBI:60392"/>
        <dbReference type="ChEBI" id="CHEBI:61386"/>
        <dbReference type="ChEBI" id="CHEBI:61387"/>
        <dbReference type="EC" id="2.7.8.13"/>
    </reaction>
</comment>
<comment type="cofactor">
    <cofactor evidence="1">
        <name>Mg(2+)</name>
        <dbReference type="ChEBI" id="CHEBI:18420"/>
    </cofactor>
</comment>
<comment type="pathway">
    <text evidence="1">Cell wall biogenesis; peptidoglycan biosynthesis.</text>
</comment>
<comment type="subcellular location">
    <subcellularLocation>
        <location evidence="1">Cell membrane</location>
        <topology evidence="1">Multi-pass membrane protein</topology>
    </subcellularLocation>
</comment>
<comment type="similarity">
    <text evidence="1">Belongs to the glycosyltransferase 4 family. MraY subfamily.</text>
</comment>
<keyword id="KW-0131">Cell cycle</keyword>
<keyword id="KW-0132">Cell division</keyword>
<keyword id="KW-1003">Cell membrane</keyword>
<keyword id="KW-0133">Cell shape</keyword>
<keyword id="KW-0961">Cell wall biogenesis/degradation</keyword>
<keyword id="KW-0460">Magnesium</keyword>
<keyword id="KW-0472">Membrane</keyword>
<keyword id="KW-0479">Metal-binding</keyword>
<keyword id="KW-0573">Peptidoglycan synthesis</keyword>
<keyword id="KW-1185">Reference proteome</keyword>
<keyword id="KW-0808">Transferase</keyword>
<keyword id="KW-0812">Transmembrane</keyword>
<keyword id="KW-1133">Transmembrane helix</keyword>
<evidence type="ECO:0000255" key="1">
    <source>
        <dbReference type="HAMAP-Rule" id="MF_00038"/>
    </source>
</evidence>
<gene>
    <name evidence="1" type="primary">mraY</name>
    <name type="ordered locus">OB1468</name>
</gene>
<reference key="1">
    <citation type="journal article" date="2002" name="Nucleic Acids Res.">
        <title>Genome sequence of Oceanobacillus iheyensis isolated from the Iheya Ridge and its unexpected adaptive capabilities to extreme environments.</title>
        <authorList>
            <person name="Takami H."/>
            <person name="Takaki Y."/>
            <person name="Uchiyama I."/>
        </authorList>
    </citation>
    <scope>NUCLEOTIDE SEQUENCE [LARGE SCALE GENOMIC DNA]</scope>
    <source>
        <strain>DSM 14371 / CIP 107618 / JCM 11309 / KCTC 3954 / HTE831</strain>
    </source>
</reference>
<sequence>MDLTGLLITIVVAFLITVLLSPIFIPFLRRLNFGQSIREEGPQSHQKKTGTPTMGGLMIIFSIIITSLIMASRTDEGINYQVWLLIFVLFGYGLLGFLDDFIKVAMKRNLGLTSKQKLFGQIIIALVFYFILRNQGFSTVIYVPGTELQFDIGWFYAVLVIFMMVGASNAVNLTDGLDGLLAGTAAIAFGAFAIIAWYGIPDHVVAVFSLAVVGALLGFLVFNAHPAKVFMGDTGSLALGGAIAAISILLKLEILLIIIGGVFVIETLSVIIQVISFKTTGKRVFKMSPLHHHYELLGWSEWRVVTTFWLVGLLFAMLGVYIEVGM</sequence>
<protein>
    <recommendedName>
        <fullName evidence="1">Phospho-N-acetylmuramoyl-pentapeptide-transferase</fullName>
        <ecNumber evidence="1">2.7.8.13</ecNumber>
    </recommendedName>
    <alternativeName>
        <fullName evidence="1">UDP-MurNAc-pentapeptide phosphotransferase</fullName>
    </alternativeName>
</protein>
<organism>
    <name type="scientific">Oceanobacillus iheyensis (strain DSM 14371 / CIP 107618 / JCM 11309 / KCTC 3954 / HTE831)</name>
    <dbReference type="NCBI Taxonomy" id="221109"/>
    <lineage>
        <taxon>Bacteria</taxon>
        <taxon>Bacillati</taxon>
        <taxon>Bacillota</taxon>
        <taxon>Bacilli</taxon>
        <taxon>Bacillales</taxon>
        <taxon>Bacillaceae</taxon>
        <taxon>Oceanobacillus</taxon>
    </lineage>
</organism>
<proteinExistence type="inferred from homology"/>
<name>MRAY_OCEIH</name>
<feature type="chain" id="PRO_0000108861" description="Phospho-N-acetylmuramoyl-pentapeptide-transferase">
    <location>
        <begin position="1"/>
        <end position="326"/>
    </location>
</feature>
<feature type="transmembrane region" description="Helical" evidence="1">
    <location>
        <begin position="5"/>
        <end position="25"/>
    </location>
</feature>
<feature type="transmembrane region" description="Helical" evidence="1">
    <location>
        <begin position="51"/>
        <end position="71"/>
    </location>
</feature>
<feature type="transmembrane region" description="Helical" evidence="1">
    <location>
        <begin position="82"/>
        <end position="102"/>
    </location>
</feature>
<feature type="transmembrane region" description="Helical" evidence="1">
    <location>
        <begin position="122"/>
        <end position="142"/>
    </location>
</feature>
<feature type="transmembrane region" description="Helical" evidence="1">
    <location>
        <begin position="148"/>
        <end position="168"/>
    </location>
</feature>
<feature type="transmembrane region" description="Helical" evidence="1">
    <location>
        <begin position="180"/>
        <end position="200"/>
    </location>
</feature>
<feature type="transmembrane region" description="Helical" evidence="1">
    <location>
        <begin position="204"/>
        <end position="224"/>
    </location>
</feature>
<feature type="transmembrane region" description="Helical" evidence="1">
    <location>
        <begin position="229"/>
        <end position="249"/>
    </location>
</feature>
<feature type="transmembrane region" description="Helical" evidence="1">
    <location>
        <begin position="252"/>
        <end position="272"/>
    </location>
</feature>
<feature type="transmembrane region" description="Helical" evidence="1">
    <location>
        <begin position="304"/>
        <end position="324"/>
    </location>
</feature>
<dbReference type="EC" id="2.7.8.13" evidence="1"/>
<dbReference type="EMBL" id="BA000028">
    <property type="protein sequence ID" value="BAC13424.1"/>
    <property type="molecule type" value="Genomic_DNA"/>
</dbReference>
<dbReference type="RefSeq" id="WP_011065869.1">
    <property type="nucleotide sequence ID" value="NC_004193.1"/>
</dbReference>
<dbReference type="SMR" id="Q8ER51"/>
<dbReference type="STRING" id="221109.gene:10733708"/>
<dbReference type="KEGG" id="oih:OB1468"/>
<dbReference type="eggNOG" id="COG0472">
    <property type="taxonomic scope" value="Bacteria"/>
</dbReference>
<dbReference type="HOGENOM" id="CLU_023982_0_1_9"/>
<dbReference type="OrthoDB" id="9805475at2"/>
<dbReference type="PhylomeDB" id="Q8ER51"/>
<dbReference type="UniPathway" id="UPA00219"/>
<dbReference type="Proteomes" id="UP000000822">
    <property type="component" value="Chromosome"/>
</dbReference>
<dbReference type="GO" id="GO:0005886">
    <property type="term" value="C:plasma membrane"/>
    <property type="evidence" value="ECO:0007669"/>
    <property type="project" value="UniProtKB-SubCell"/>
</dbReference>
<dbReference type="GO" id="GO:0046872">
    <property type="term" value="F:metal ion binding"/>
    <property type="evidence" value="ECO:0007669"/>
    <property type="project" value="UniProtKB-KW"/>
</dbReference>
<dbReference type="GO" id="GO:0008963">
    <property type="term" value="F:phospho-N-acetylmuramoyl-pentapeptide-transferase activity"/>
    <property type="evidence" value="ECO:0007669"/>
    <property type="project" value="UniProtKB-UniRule"/>
</dbReference>
<dbReference type="GO" id="GO:0051992">
    <property type="term" value="F:UDP-N-acetylmuramoyl-L-alanyl-D-glutamyl-meso-2,6-diaminopimelyl-D-alanyl-D-alanine:undecaprenyl-phosphate transferase activity"/>
    <property type="evidence" value="ECO:0007669"/>
    <property type="project" value="RHEA"/>
</dbReference>
<dbReference type="GO" id="GO:0051301">
    <property type="term" value="P:cell division"/>
    <property type="evidence" value="ECO:0007669"/>
    <property type="project" value="UniProtKB-KW"/>
</dbReference>
<dbReference type="GO" id="GO:0071555">
    <property type="term" value="P:cell wall organization"/>
    <property type="evidence" value="ECO:0007669"/>
    <property type="project" value="UniProtKB-KW"/>
</dbReference>
<dbReference type="GO" id="GO:0009252">
    <property type="term" value="P:peptidoglycan biosynthetic process"/>
    <property type="evidence" value="ECO:0007669"/>
    <property type="project" value="UniProtKB-UniRule"/>
</dbReference>
<dbReference type="GO" id="GO:0008360">
    <property type="term" value="P:regulation of cell shape"/>
    <property type="evidence" value="ECO:0007669"/>
    <property type="project" value="UniProtKB-KW"/>
</dbReference>
<dbReference type="CDD" id="cd06852">
    <property type="entry name" value="GT_MraY"/>
    <property type="match status" value="1"/>
</dbReference>
<dbReference type="HAMAP" id="MF_00038">
    <property type="entry name" value="MraY"/>
    <property type="match status" value="1"/>
</dbReference>
<dbReference type="InterPro" id="IPR000715">
    <property type="entry name" value="Glycosyl_transferase_4"/>
</dbReference>
<dbReference type="InterPro" id="IPR003524">
    <property type="entry name" value="PNAcMuramoyl-5peptid_Trfase"/>
</dbReference>
<dbReference type="InterPro" id="IPR018480">
    <property type="entry name" value="PNAcMuramoyl-5peptid_Trfase_CS"/>
</dbReference>
<dbReference type="NCBIfam" id="TIGR00445">
    <property type="entry name" value="mraY"/>
    <property type="match status" value="1"/>
</dbReference>
<dbReference type="PANTHER" id="PTHR22926">
    <property type="entry name" value="PHOSPHO-N-ACETYLMURAMOYL-PENTAPEPTIDE-TRANSFERASE"/>
    <property type="match status" value="1"/>
</dbReference>
<dbReference type="PANTHER" id="PTHR22926:SF5">
    <property type="entry name" value="PHOSPHO-N-ACETYLMURAMOYL-PENTAPEPTIDE-TRANSFERASE HOMOLOG"/>
    <property type="match status" value="1"/>
</dbReference>
<dbReference type="Pfam" id="PF00953">
    <property type="entry name" value="Glycos_transf_4"/>
    <property type="match status" value="1"/>
</dbReference>
<dbReference type="PROSITE" id="PS01347">
    <property type="entry name" value="MRAY_1"/>
    <property type="match status" value="1"/>
</dbReference>
<dbReference type="PROSITE" id="PS01348">
    <property type="entry name" value="MRAY_2"/>
    <property type="match status" value="1"/>
</dbReference>
<accession>Q8ER51</accession>